<protein>
    <recommendedName>
        <fullName evidence="1">Phosphomethylpyrimidine synthase</fullName>
        <ecNumber evidence="1">4.1.99.17</ecNumber>
    </recommendedName>
    <alternativeName>
        <fullName evidence="1">Hydroxymethylpyrimidine phosphate synthase</fullName>
        <shortName evidence="1">HMP-P synthase</shortName>
        <shortName evidence="1">HMP-phosphate synthase</shortName>
        <shortName evidence="1">HMPP synthase</shortName>
    </alternativeName>
    <alternativeName>
        <fullName evidence="1">Thiamine biosynthesis protein ThiC</fullName>
    </alternativeName>
</protein>
<dbReference type="EC" id="4.1.99.17" evidence="1"/>
<dbReference type="EMBL" id="AP006878">
    <property type="protein sequence ID" value="BAD84622.1"/>
    <property type="molecule type" value="Genomic_DNA"/>
</dbReference>
<dbReference type="RefSeq" id="WP_011249388.1">
    <property type="nucleotide sequence ID" value="NC_006624.1"/>
</dbReference>
<dbReference type="SMR" id="Q5JD26"/>
<dbReference type="FunCoup" id="Q5JD26">
    <property type="interactions" value="74"/>
</dbReference>
<dbReference type="STRING" id="69014.TK0433"/>
<dbReference type="EnsemblBacteria" id="BAD84622">
    <property type="protein sequence ID" value="BAD84622"/>
    <property type="gene ID" value="TK0433"/>
</dbReference>
<dbReference type="GeneID" id="78446943"/>
<dbReference type="KEGG" id="tko:TK0433"/>
<dbReference type="PATRIC" id="fig|69014.16.peg.425"/>
<dbReference type="eggNOG" id="arCOG02741">
    <property type="taxonomic scope" value="Archaea"/>
</dbReference>
<dbReference type="HOGENOM" id="CLU_013181_2_2_2"/>
<dbReference type="InParanoid" id="Q5JD26"/>
<dbReference type="OrthoDB" id="335406at2157"/>
<dbReference type="PhylomeDB" id="Q5JD26"/>
<dbReference type="UniPathway" id="UPA00060"/>
<dbReference type="Proteomes" id="UP000000536">
    <property type="component" value="Chromosome"/>
</dbReference>
<dbReference type="GO" id="GO:0051539">
    <property type="term" value="F:4 iron, 4 sulfur cluster binding"/>
    <property type="evidence" value="ECO:0007669"/>
    <property type="project" value="UniProtKB-KW"/>
</dbReference>
<dbReference type="GO" id="GO:0016830">
    <property type="term" value="F:carbon-carbon lyase activity"/>
    <property type="evidence" value="ECO:0007669"/>
    <property type="project" value="InterPro"/>
</dbReference>
<dbReference type="GO" id="GO:0008270">
    <property type="term" value="F:zinc ion binding"/>
    <property type="evidence" value="ECO:0007669"/>
    <property type="project" value="UniProtKB-UniRule"/>
</dbReference>
<dbReference type="GO" id="GO:0009228">
    <property type="term" value="P:thiamine biosynthetic process"/>
    <property type="evidence" value="ECO:0007669"/>
    <property type="project" value="UniProtKB-KW"/>
</dbReference>
<dbReference type="GO" id="GO:0009229">
    <property type="term" value="P:thiamine diphosphate biosynthetic process"/>
    <property type="evidence" value="ECO:0007669"/>
    <property type="project" value="UniProtKB-UniRule"/>
</dbReference>
<dbReference type="FunFam" id="3.20.20.540:FF:000001">
    <property type="entry name" value="Phosphomethylpyrimidine synthase"/>
    <property type="match status" value="1"/>
</dbReference>
<dbReference type="Gene3D" id="3.20.20.540">
    <property type="entry name" value="Radical SAM ThiC family, central domain"/>
    <property type="match status" value="1"/>
</dbReference>
<dbReference type="HAMAP" id="MF_00089">
    <property type="entry name" value="ThiC"/>
    <property type="match status" value="1"/>
</dbReference>
<dbReference type="InterPro" id="IPR037509">
    <property type="entry name" value="ThiC"/>
</dbReference>
<dbReference type="InterPro" id="IPR038521">
    <property type="entry name" value="ThiC/Bza_core_dom"/>
</dbReference>
<dbReference type="InterPro" id="IPR002817">
    <property type="entry name" value="ThiC/BzaA/B"/>
</dbReference>
<dbReference type="NCBIfam" id="NF009895">
    <property type="entry name" value="PRK13352.1"/>
    <property type="match status" value="1"/>
</dbReference>
<dbReference type="NCBIfam" id="TIGR00190">
    <property type="entry name" value="thiC"/>
    <property type="match status" value="1"/>
</dbReference>
<dbReference type="PANTHER" id="PTHR30557:SF1">
    <property type="entry name" value="PHOSPHOMETHYLPYRIMIDINE SYNTHASE, CHLOROPLASTIC"/>
    <property type="match status" value="1"/>
</dbReference>
<dbReference type="PANTHER" id="PTHR30557">
    <property type="entry name" value="THIAMINE BIOSYNTHESIS PROTEIN THIC"/>
    <property type="match status" value="1"/>
</dbReference>
<dbReference type="Pfam" id="PF01964">
    <property type="entry name" value="ThiC_Rad_SAM"/>
    <property type="match status" value="1"/>
</dbReference>
<dbReference type="SFLD" id="SFLDF00407">
    <property type="entry name" value="phosphomethylpyrimidine_syntha"/>
    <property type="match status" value="1"/>
</dbReference>
<dbReference type="SFLD" id="SFLDG01114">
    <property type="entry name" value="phosphomethylpyrimidine_syntha"/>
    <property type="match status" value="1"/>
</dbReference>
<dbReference type="SFLD" id="SFLDS00113">
    <property type="entry name" value="Radical_SAM_Phosphomethylpyrim"/>
    <property type="match status" value="1"/>
</dbReference>
<organism>
    <name type="scientific">Thermococcus kodakarensis (strain ATCC BAA-918 / JCM 12380 / KOD1)</name>
    <name type="common">Pyrococcus kodakaraensis (strain KOD1)</name>
    <dbReference type="NCBI Taxonomy" id="69014"/>
    <lineage>
        <taxon>Archaea</taxon>
        <taxon>Methanobacteriati</taxon>
        <taxon>Methanobacteriota</taxon>
        <taxon>Thermococci</taxon>
        <taxon>Thermococcales</taxon>
        <taxon>Thermococcaceae</taxon>
        <taxon>Thermococcus</taxon>
    </lineage>
</organism>
<name>THIC_THEKO</name>
<comment type="function">
    <text evidence="1">Catalyzes the synthesis of the hydroxymethylpyrimidine phosphate (HMP-P) moiety of thiamine from aminoimidazole ribotide (AIR) in a radical S-adenosyl-L-methionine (SAM)-dependent reaction.</text>
</comment>
<comment type="catalytic activity">
    <reaction evidence="1">
        <text>5-amino-1-(5-phospho-beta-D-ribosyl)imidazole + S-adenosyl-L-methionine = 4-amino-2-methyl-5-(phosphooxymethyl)pyrimidine + CO + 5'-deoxyadenosine + formate + L-methionine + 3 H(+)</text>
        <dbReference type="Rhea" id="RHEA:24840"/>
        <dbReference type="ChEBI" id="CHEBI:15378"/>
        <dbReference type="ChEBI" id="CHEBI:15740"/>
        <dbReference type="ChEBI" id="CHEBI:17245"/>
        <dbReference type="ChEBI" id="CHEBI:17319"/>
        <dbReference type="ChEBI" id="CHEBI:57844"/>
        <dbReference type="ChEBI" id="CHEBI:58354"/>
        <dbReference type="ChEBI" id="CHEBI:59789"/>
        <dbReference type="ChEBI" id="CHEBI:137981"/>
        <dbReference type="EC" id="4.1.99.17"/>
    </reaction>
</comment>
<comment type="cofactor">
    <cofactor evidence="1">
        <name>[4Fe-4S] cluster</name>
        <dbReference type="ChEBI" id="CHEBI:49883"/>
    </cofactor>
    <text evidence="1">Binds 1 [4Fe-4S] cluster per subunit. The cluster is coordinated with 3 cysteines and an exchangeable S-adenosyl-L-methionine.</text>
</comment>
<comment type="pathway">
    <text evidence="1">Cofactor biosynthesis; thiamine diphosphate biosynthesis.</text>
</comment>
<comment type="similarity">
    <text evidence="1">Belongs to the ThiC family.</text>
</comment>
<keyword id="KW-0004">4Fe-4S</keyword>
<keyword id="KW-0408">Iron</keyword>
<keyword id="KW-0411">Iron-sulfur</keyword>
<keyword id="KW-0456">Lyase</keyword>
<keyword id="KW-0479">Metal-binding</keyword>
<keyword id="KW-1185">Reference proteome</keyword>
<keyword id="KW-0949">S-adenosyl-L-methionine</keyword>
<keyword id="KW-0784">Thiamine biosynthesis</keyword>
<keyword id="KW-0862">Zinc</keyword>
<sequence length="428" mass="47340">MTQLEEARKGVVTEEMKFIAEREGIDAEKLRRNVAKGYTVIFRNVRHDWVKPVAVGAGVRVKVNANIGTSRDIVDVKAEIEKAKVAVKYGADTIMDLSTGGDLDEIRKTIMHAVDVPVGTVPIYQAAEEMLAKGKAIIEMSEEDMWRAVEKHFKDGVDYTTIHVGVTKEVVEKMKRTKRAVGMVSRGGTFLAAWILHWGEENPFYKDYDYLLELAREYDVVLSLGDGLRPGGLPDAGDELQIAELYTLGRLVRRAREAGVQTMVEGPGHVPIDQIAAQVKLAKVATDNAPFYVLGPIVTDIFPGYDHITAAIGGAIAALNGADFLCYVTPAEHLGLPDVEHVRQGVIAAKIAAHAVNLTRFEADFKKDYLMALARGKLNWARQFELSMDKERFVEIRKERPTKTEACSMCGDLCAIKLINDMLAGERK</sequence>
<reference key="1">
    <citation type="journal article" date="2005" name="Genome Res.">
        <title>Complete genome sequence of the hyperthermophilic archaeon Thermococcus kodakaraensis KOD1 and comparison with Pyrococcus genomes.</title>
        <authorList>
            <person name="Fukui T."/>
            <person name="Atomi H."/>
            <person name="Kanai T."/>
            <person name="Matsumi R."/>
            <person name="Fujiwara S."/>
            <person name="Imanaka T."/>
        </authorList>
    </citation>
    <scope>NUCLEOTIDE SEQUENCE [LARGE SCALE GENOMIC DNA]</scope>
    <source>
        <strain>ATCC BAA-918 / JCM 12380 / KOD1</strain>
    </source>
</reference>
<feature type="chain" id="PRO_0000152872" description="Phosphomethylpyrimidine synthase">
    <location>
        <begin position="1"/>
        <end position="428"/>
    </location>
</feature>
<feature type="binding site" evidence="1">
    <location>
        <position position="66"/>
    </location>
    <ligand>
        <name>substrate</name>
    </ligand>
</feature>
<feature type="binding site" evidence="1">
    <location>
        <position position="95"/>
    </location>
    <ligand>
        <name>substrate</name>
    </ligand>
</feature>
<feature type="binding site" evidence="1">
    <location>
        <position position="124"/>
    </location>
    <ligand>
        <name>substrate</name>
    </ligand>
</feature>
<feature type="binding site" evidence="1">
    <location>
        <position position="163"/>
    </location>
    <ligand>
        <name>substrate</name>
    </ligand>
</feature>
<feature type="binding site" evidence="1">
    <location>
        <begin position="185"/>
        <end position="187"/>
    </location>
    <ligand>
        <name>substrate</name>
    </ligand>
</feature>
<feature type="binding site" evidence="1">
    <location>
        <begin position="226"/>
        <end position="229"/>
    </location>
    <ligand>
        <name>substrate</name>
    </ligand>
</feature>
<feature type="binding site" evidence="1">
    <location>
        <position position="265"/>
    </location>
    <ligand>
        <name>substrate</name>
    </ligand>
</feature>
<feature type="binding site" evidence="1">
    <location>
        <position position="269"/>
    </location>
    <ligand>
        <name>Zn(2+)</name>
        <dbReference type="ChEBI" id="CHEBI:29105"/>
    </ligand>
</feature>
<feature type="binding site" evidence="1">
    <location>
        <position position="292"/>
    </location>
    <ligand>
        <name>substrate</name>
    </ligand>
</feature>
<feature type="binding site" evidence="1">
    <location>
        <position position="333"/>
    </location>
    <ligand>
        <name>Zn(2+)</name>
        <dbReference type="ChEBI" id="CHEBI:29105"/>
    </ligand>
</feature>
<feature type="binding site" evidence="1">
    <location>
        <position position="407"/>
    </location>
    <ligand>
        <name>[4Fe-4S] cluster</name>
        <dbReference type="ChEBI" id="CHEBI:49883"/>
        <note>4Fe-4S-S-AdoMet</note>
    </ligand>
</feature>
<feature type="binding site" evidence="1">
    <location>
        <position position="410"/>
    </location>
    <ligand>
        <name>[4Fe-4S] cluster</name>
        <dbReference type="ChEBI" id="CHEBI:49883"/>
        <note>4Fe-4S-S-AdoMet</note>
    </ligand>
</feature>
<feature type="binding site" evidence="1">
    <location>
        <position position="414"/>
    </location>
    <ligand>
        <name>[4Fe-4S] cluster</name>
        <dbReference type="ChEBI" id="CHEBI:49883"/>
        <note>4Fe-4S-S-AdoMet</note>
    </ligand>
</feature>
<evidence type="ECO:0000255" key="1">
    <source>
        <dbReference type="HAMAP-Rule" id="MF_00089"/>
    </source>
</evidence>
<proteinExistence type="inferred from homology"/>
<accession>Q5JD26</accession>
<gene>
    <name evidence="1" type="primary">thiC</name>
    <name type="ordered locus">TK0433</name>
</gene>